<dbReference type="EC" id="1.13.11.54" evidence="1"/>
<dbReference type="EC" id="1.13.11.53" evidence="1"/>
<dbReference type="EMBL" id="BA000019">
    <property type="protein sequence ID" value="BAB74423.1"/>
    <property type="molecule type" value="Genomic_DNA"/>
</dbReference>
<dbReference type="PIR" id="AE2146">
    <property type="entry name" value="AE2146"/>
</dbReference>
<dbReference type="RefSeq" id="WP_010996877.1">
    <property type="nucleotide sequence ID" value="NZ_RSCN01000030.1"/>
</dbReference>
<dbReference type="SMR" id="Q8YTJ3"/>
<dbReference type="STRING" id="103690.gene:10494757"/>
<dbReference type="KEGG" id="ana:all2724"/>
<dbReference type="eggNOG" id="COG1791">
    <property type="taxonomic scope" value="Bacteria"/>
</dbReference>
<dbReference type="OrthoDB" id="9795636at2"/>
<dbReference type="UniPathway" id="UPA00904">
    <property type="reaction ID" value="UER00878"/>
</dbReference>
<dbReference type="Proteomes" id="UP000002483">
    <property type="component" value="Chromosome"/>
</dbReference>
<dbReference type="GO" id="GO:0010308">
    <property type="term" value="F:acireductone dioxygenase (Ni2+-requiring) activity"/>
    <property type="evidence" value="ECO:0007669"/>
    <property type="project" value="UniProtKB-UniRule"/>
</dbReference>
<dbReference type="GO" id="GO:0010309">
    <property type="term" value="F:acireductone dioxygenase [iron(II)-requiring] activity"/>
    <property type="evidence" value="ECO:0007669"/>
    <property type="project" value="UniProtKB-UniRule"/>
</dbReference>
<dbReference type="GO" id="GO:0005506">
    <property type="term" value="F:iron ion binding"/>
    <property type="evidence" value="ECO:0007669"/>
    <property type="project" value="UniProtKB-UniRule"/>
</dbReference>
<dbReference type="GO" id="GO:0016151">
    <property type="term" value="F:nickel cation binding"/>
    <property type="evidence" value="ECO:0007669"/>
    <property type="project" value="UniProtKB-UniRule"/>
</dbReference>
<dbReference type="GO" id="GO:0019509">
    <property type="term" value="P:L-methionine salvage from methylthioadenosine"/>
    <property type="evidence" value="ECO:0007669"/>
    <property type="project" value="UniProtKB-UniRule"/>
</dbReference>
<dbReference type="GO" id="GO:0019284">
    <property type="term" value="P:L-methionine salvage from S-adenosylmethionine"/>
    <property type="evidence" value="ECO:0007669"/>
    <property type="project" value="InterPro"/>
</dbReference>
<dbReference type="CDD" id="cd02232">
    <property type="entry name" value="cupin_ARD"/>
    <property type="match status" value="1"/>
</dbReference>
<dbReference type="Gene3D" id="2.60.120.10">
    <property type="entry name" value="Jelly Rolls"/>
    <property type="match status" value="1"/>
</dbReference>
<dbReference type="HAMAP" id="MF_01682">
    <property type="entry name" value="Salvage_MtnD"/>
    <property type="match status" value="1"/>
</dbReference>
<dbReference type="InterPro" id="IPR004313">
    <property type="entry name" value="ARD"/>
</dbReference>
<dbReference type="InterPro" id="IPR023956">
    <property type="entry name" value="ARD_bac"/>
</dbReference>
<dbReference type="InterPro" id="IPR014710">
    <property type="entry name" value="RmlC-like_jellyroll"/>
</dbReference>
<dbReference type="InterPro" id="IPR011051">
    <property type="entry name" value="RmlC_Cupin_sf"/>
</dbReference>
<dbReference type="PANTHER" id="PTHR23418">
    <property type="entry name" value="ACIREDUCTONE DIOXYGENASE"/>
    <property type="match status" value="1"/>
</dbReference>
<dbReference type="PANTHER" id="PTHR23418:SF0">
    <property type="entry name" value="ACIREDUCTONE DIOXYGENASE"/>
    <property type="match status" value="1"/>
</dbReference>
<dbReference type="Pfam" id="PF03079">
    <property type="entry name" value="ARD"/>
    <property type="match status" value="1"/>
</dbReference>
<dbReference type="SUPFAM" id="SSF51182">
    <property type="entry name" value="RmlC-like cupins"/>
    <property type="match status" value="1"/>
</dbReference>
<feature type="chain" id="PRO_0000359170" description="Acireductone dioxygenase">
    <location>
        <begin position="1"/>
        <end position="182"/>
    </location>
</feature>
<feature type="binding site" evidence="1">
    <location>
        <position position="100"/>
    </location>
    <ligand>
        <name>Fe(2+)</name>
        <dbReference type="ChEBI" id="CHEBI:29033"/>
    </ligand>
</feature>
<feature type="binding site" evidence="1">
    <location>
        <position position="100"/>
    </location>
    <ligand>
        <name>Ni(2+)</name>
        <dbReference type="ChEBI" id="CHEBI:49786"/>
    </ligand>
</feature>
<feature type="binding site" evidence="1">
    <location>
        <position position="102"/>
    </location>
    <ligand>
        <name>Fe(2+)</name>
        <dbReference type="ChEBI" id="CHEBI:29033"/>
    </ligand>
</feature>
<feature type="binding site" evidence="1">
    <location>
        <position position="102"/>
    </location>
    <ligand>
        <name>Ni(2+)</name>
        <dbReference type="ChEBI" id="CHEBI:49786"/>
    </ligand>
</feature>
<feature type="binding site" evidence="1">
    <location>
        <position position="106"/>
    </location>
    <ligand>
        <name>Fe(2+)</name>
        <dbReference type="ChEBI" id="CHEBI:29033"/>
    </ligand>
</feature>
<feature type="binding site" evidence="1">
    <location>
        <position position="106"/>
    </location>
    <ligand>
        <name>Ni(2+)</name>
        <dbReference type="ChEBI" id="CHEBI:49786"/>
    </ligand>
</feature>
<feature type="binding site" evidence="1">
    <location>
        <position position="145"/>
    </location>
    <ligand>
        <name>Fe(2+)</name>
        <dbReference type="ChEBI" id="CHEBI:29033"/>
    </ligand>
</feature>
<feature type="binding site" evidence="1">
    <location>
        <position position="145"/>
    </location>
    <ligand>
        <name>Ni(2+)</name>
        <dbReference type="ChEBI" id="CHEBI:49786"/>
    </ligand>
</feature>
<comment type="function">
    <text evidence="1">Catalyzes 2 different reactions between oxygen and the acireductone 1,2-dihydroxy-3-keto-5-methylthiopentene (DHK-MTPene) depending upon the metal bound in the active site. Fe-containing acireductone dioxygenase (Fe-ARD) produces formate and 2-keto-4-methylthiobutyrate (KMTB), the alpha-ketoacid precursor of methionine in the methionine recycle pathway. Ni-containing acireductone dioxygenase (Ni-ARD) produces methylthiopropionate, carbon monoxide and formate, and does not lie on the methionine recycle pathway.</text>
</comment>
<comment type="catalytic activity">
    <reaction evidence="1">
        <text>1,2-dihydroxy-5-(methylsulfanyl)pent-1-en-3-one + O2 = 3-(methylsulfanyl)propanoate + CO + formate + 2 H(+)</text>
        <dbReference type="Rhea" id="RHEA:14161"/>
        <dbReference type="ChEBI" id="CHEBI:15378"/>
        <dbReference type="ChEBI" id="CHEBI:15379"/>
        <dbReference type="ChEBI" id="CHEBI:15740"/>
        <dbReference type="ChEBI" id="CHEBI:17245"/>
        <dbReference type="ChEBI" id="CHEBI:49016"/>
        <dbReference type="ChEBI" id="CHEBI:49252"/>
        <dbReference type="EC" id="1.13.11.53"/>
    </reaction>
</comment>
<comment type="catalytic activity">
    <reaction evidence="1">
        <text>1,2-dihydroxy-5-(methylsulfanyl)pent-1-en-3-one + O2 = 4-methylsulfanyl-2-oxobutanoate + formate + 2 H(+)</text>
        <dbReference type="Rhea" id="RHEA:24504"/>
        <dbReference type="ChEBI" id="CHEBI:15378"/>
        <dbReference type="ChEBI" id="CHEBI:15379"/>
        <dbReference type="ChEBI" id="CHEBI:15740"/>
        <dbReference type="ChEBI" id="CHEBI:16723"/>
        <dbReference type="ChEBI" id="CHEBI:49252"/>
        <dbReference type="EC" id="1.13.11.54"/>
    </reaction>
</comment>
<comment type="cofactor">
    <cofactor evidence="1">
        <name>Fe(2+)</name>
        <dbReference type="ChEBI" id="CHEBI:29033"/>
    </cofactor>
    <text evidence="1">Binds 1 Fe(2+) cation per monomer.</text>
</comment>
<comment type="cofactor">
    <cofactor evidence="1">
        <name>Ni(2+)</name>
        <dbReference type="ChEBI" id="CHEBI:49786"/>
    </cofactor>
    <text evidence="1">Binds 1 nickel ion per monomer.</text>
</comment>
<comment type="pathway">
    <text evidence="1">Amino-acid biosynthesis; L-methionine biosynthesis via salvage pathway; L-methionine from S-methyl-5-thio-alpha-D-ribose 1-phosphate: step 5/6.</text>
</comment>
<comment type="subunit">
    <text evidence="1">Monomer.</text>
</comment>
<comment type="similarity">
    <text evidence="1">Belongs to the acireductone dioxygenase (ARD) family.</text>
</comment>
<sequence length="182" mass="20447">MATLLLEDGTIESNLDEIVRELAPLGIYLKHYDPGTSILFPHLLTQDALTDKEKCHIVDLHNSVFEFIQQENGYLWCDLLNVHPGSPNLQTLIATYAQYHTHTAPEALYVLAGEMIFGFVKPDGSQVQLLVQSQDYLHIPSGVEHWCSLTASLNFKAVRYFTAADGWVPNYTGTRLNDSLNK</sequence>
<gene>
    <name evidence="1" type="primary">mtnD</name>
    <name type="ordered locus">all2724</name>
</gene>
<proteinExistence type="inferred from homology"/>
<name>MTND_NOSS1</name>
<organism>
    <name type="scientific">Nostoc sp. (strain PCC 7120 / SAG 25.82 / UTEX 2576)</name>
    <dbReference type="NCBI Taxonomy" id="103690"/>
    <lineage>
        <taxon>Bacteria</taxon>
        <taxon>Bacillati</taxon>
        <taxon>Cyanobacteriota</taxon>
        <taxon>Cyanophyceae</taxon>
        <taxon>Nostocales</taxon>
        <taxon>Nostocaceae</taxon>
        <taxon>Nostoc</taxon>
    </lineage>
</organism>
<evidence type="ECO:0000255" key="1">
    <source>
        <dbReference type="HAMAP-Rule" id="MF_01682"/>
    </source>
</evidence>
<protein>
    <recommendedName>
        <fullName evidence="1">Acireductone dioxygenase</fullName>
    </recommendedName>
    <alternativeName>
        <fullName evidence="1">1,2-dihydroxy-3-keto-5-methylthiopentene dioxygenase</fullName>
        <shortName evidence="1">DHK-MTPene dioxygenase</shortName>
    </alternativeName>
    <alternativeName>
        <fullName evidence="1">Acireductone dioxygenase (Fe(2+)-requiring)</fullName>
        <shortName evidence="1">ARD'</shortName>
        <shortName evidence="1">Fe-ARD</shortName>
        <ecNumber evidence="1">1.13.11.54</ecNumber>
    </alternativeName>
    <alternativeName>
        <fullName evidence="1">Acireductone dioxygenase (Ni(2+)-requiring)</fullName>
        <shortName evidence="1">ARD</shortName>
        <shortName evidence="1">Ni-ARD</shortName>
        <ecNumber evidence="1">1.13.11.53</ecNumber>
    </alternativeName>
</protein>
<keyword id="KW-0028">Amino-acid biosynthesis</keyword>
<keyword id="KW-0223">Dioxygenase</keyword>
<keyword id="KW-0408">Iron</keyword>
<keyword id="KW-0479">Metal-binding</keyword>
<keyword id="KW-0486">Methionine biosynthesis</keyword>
<keyword id="KW-0533">Nickel</keyword>
<keyword id="KW-0560">Oxidoreductase</keyword>
<keyword id="KW-1185">Reference proteome</keyword>
<accession>Q8YTJ3</accession>
<reference key="1">
    <citation type="journal article" date="2001" name="DNA Res.">
        <title>Complete genomic sequence of the filamentous nitrogen-fixing cyanobacterium Anabaena sp. strain PCC 7120.</title>
        <authorList>
            <person name="Kaneko T."/>
            <person name="Nakamura Y."/>
            <person name="Wolk C.P."/>
            <person name="Kuritz T."/>
            <person name="Sasamoto S."/>
            <person name="Watanabe A."/>
            <person name="Iriguchi M."/>
            <person name="Ishikawa A."/>
            <person name="Kawashima K."/>
            <person name="Kimura T."/>
            <person name="Kishida Y."/>
            <person name="Kohara M."/>
            <person name="Matsumoto M."/>
            <person name="Matsuno A."/>
            <person name="Muraki A."/>
            <person name="Nakazaki N."/>
            <person name="Shimpo S."/>
            <person name="Sugimoto M."/>
            <person name="Takazawa M."/>
            <person name="Yamada M."/>
            <person name="Yasuda M."/>
            <person name="Tabata S."/>
        </authorList>
    </citation>
    <scope>NUCLEOTIDE SEQUENCE [LARGE SCALE GENOMIC DNA]</scope>
    <source>
        <strain>PCC 7120 / SAG 25.82 / UTEX 2576</strain>
    </source>
</reference>